<name>TAL1_PECAS</name>
<proteinExistence type="inferred from homology"/>
<feature type="chain" id="PRO_0000230952" description="Transaldolase 1">
    <location>
        <begin position="1"/>
        <end position="316"/>
    </location>
</feature>
<feature type="active site" description="Schiff-base intermediate with substrate" evidence="2">
    <location>
        <position position="131"/>
    </location>
</feature>
<organism>
    <name type="scientific">Pectobacterium atrosepticum (strain SCRI 1043 / ATCC BAA-672)</name>
    <name type="common">Erwinia carotovora subsp. atroseptica</name>
    <dbReference type="NCBI Taxonomy" id="218491"/>
    <lineage>
        <taxon>Bacteria</taxon>
        <taxon>Pseudomonadati</taxon>
        <taxon>Pseudomonadota</taxon>
        <taxon>Gammaproteobacteria</taxon>
        <taxon>Enterobacterales</taxon>
        <taxon>Pectobacteriaceae</taxon>
        <taxon>Pectobacterium</taxon>
    </lineage>
</organism>
<evidence type="ECO:0000250" key="1"/>
<evidence type="ECO:0000255" key="2">
    <source>
        <dbReference type="HAMAP-Rule" id="MF_00492"/>
    </source>
</evidence>
<reference key="1">
    <citation type="journal article" date="2004" name="Proc. Natl. Acad. Sci. U.S.A.">
        <title>Genome sequence of the enterobacterial phytopathogen Erwinia carotovora subsp. atroseptica and characterization of virulence factors.</title>
        <authorList>
            <person name="Bell K.S."/>
            <person name="Sebaihia M."/>
            <person name="Pritchard L."/>
            <person name="Holden M.T.G."/>
            <person name="Hyman L.J."/>
            <person name="Holeva M.C."/>
            <person name="Thomson N.R."/>
            <person name="Bentley S.D."/>
            <person name="Churcher L.J.C."/>
            <person name="Mungall K."/>
            <person name="Atkin R."/>
            <person name="Bason N."/>
            <person name="Brooks K."/>
            <person name="Chillingworth T."/>
            <person name="Clark K."/>
            <person name="Doggett J."/>
            <person name="Fraser A."/>
            <person name="Hance Z."/>
            <person name="Hauser H."/>
            <person name="Jagels K."/>
            <person name="Moule S."/>
            <person name="Norbertczak H."/>
            <person name="Ormond D."/>
            <person name="Price C."/>
            <person name="Quail M.A."/>
            <person name="Sanders M."/>
            <person name="Walker D."/>
            <person name="Whitehead S."/>
            <person name="Salmond G.P.C."/>
            <person name="Birch P.R.J."/>
            <person name="Parkhill J."/>
            <person name="Toth I.K."/>
        </authorList>
    </citation>
    <scope>NUCLEOTIDE SEQUENCE [LARGE SCALE GENOMIC DNA]</scope>
    <source>
        <strain>SCRI 1043 / ATCC BAA-672</strain>
    </source>
</reference>
<protein>
    <recommendedName>
        <fullName evidence="2">Transaldolase 1</fullName>
        <ecNumber evidence="2">2.2.1.2</ecNumber>
    </recommendedName>
</protein>
<dbReference type="EC" id="2.2.1.2" evidence="2"/>
<dbReference type="EMBL" id="BX950851">
    <property type="protein sequence ID" value="CAG73774.1"/>
    <property type="molecule type" value="Genomic_DNA"/>
</dbReference>
<dbReference type="SMR" id="Q6D8W0"/>
<dbReference type="STRING" id="218491.ECA0862"/>
<dbReference type="KEGG" id="eca:ECA0862"/>
<dbReference type="PATRIC" id="fig|218491.5.peg.863"/>
<dbReference type="eggNOG" id="COG0176">
    <property type="taxonomic scope" value="Bacteria"/>
</dbReference>
<dbReference type="HOGENOM" id="CLU_047470_0_1_6"/>
<dbReference type="OrthoDB" id="9809101at2"/>
<dbReference type="UniPathway" id="UPA00115">
    <property type="reaction ID" value="UER00414"/>
</dbReference>
<dbReference type="Proteomes" id="UP000007966">
    <property type="component" value="Chromosome"/>
</dbReference>
<dbReference type="GO" id="GO:0005829">
    <property type="term" value="C:cytosol"/>
    <property type="evidence" value="ECO:0007669"/>
    <property type="project" value="TreeGrafter"/>
</dbReference>
<dbReference type="GO" id="GO:0004801">
    <property type="term" value="F:transaldolase activity"/>
    <property type="evidence" value="ECO:0000250"/>
    <property type="project" value="UniProtKB"/>
</dbReference>
<dbReference type="GO" id="GO:0005975">
    <property type="term" value="P:carbohydrate metabolic process"/>
    <property type="evidence" value="ECO:0007669"/>
    <property type="project" value="InterPro"/>
</dbReference>
<dbReference type="GO" id="GO:0006098">
    <property type="term" value="P:pentose-phosphate shunt"/>
    <property type="evidence" value="ECO:0007669"/>
    <property type="project" value="UniProtKB-UniRule"/>
</dbReference>
<dbReference type="CDD" id="cd00957">
    <property type="entry name" value="Transaldolase_TalAB"/>
    <property type="match status" value="1"/>
</dbReference>
<dbReference type="FunFam" id="3.20.20.70:FF:000002">
    <property type="entry name" value="Transaldolase"/>
    <property type="match status" value="1"/>
</dbReference>
<dbReference type="Gene3D" id="3.20.20.70">
    <property type="entry name" value="Aldolase class I"/>
    <property type="match status" value="1"/>
</dbReference>
<dbReference type="HAMAP" id="MF_00492">
    <property type="entry name" value="Transaldolase_1"/>
    <property type="match status" value="1"/>
</dbReference>
<dbReference type="InterPro" id="IPR013785">
    <property type="entry name" value="Aldolase_TIM"/>
</dbReference>
<dbReference type="InterPro" id="IPR001585">
    <property type="entry name" value="TAL/FSA"/>
</dbReference>
<dbReference type="InterPro" id="IPR004730">
    <property type="entry name" value="Transaldolase_1"/>
</dbReference>
<dbReference type="InterPro" id="IPR018225">
    <property type="entry name" value="Transaldolase_AS"/>
</dbReference>
<dbReference type="NCBIfam" id="NF009001">
    <property type="entry name" value="PRK12346.1"/>
    <property type="match status" value="1"/>
</dbReference>
<dbReference type="NCBIfam" id="TIGR00874">
    <property type="entry name" value="talAB"/>
    <property type="match status" value="1"/>
</dbReference>
<dbReference type="PANTHER" id="PTHR10683">
    <property type="entry name" value="TRANSALDOLASE"/>
    <property type="match status" value="1"/>
</dbReference>
<dbReference type="PANTHER" id="PTHR10683:SF16">
    <property type="entry name" value="TRANSALDOLASE A"/>
    <property type="match status" value="1"/>
</dbReference>
<dbReference type="Pfam" id="PF00923">
    <property type="entry name" value="TAL_FSA"/>
    <property type="match status" value="1"/>
</dbReference>
<dbReference type="SUPFAM" id="SSF51569">
    <property type="entry name" value="Aldolase"/>
    <property type="match status" value="1"/>
</dbReference>
<dbReference type="PROSITE" id="PS01054">
    <property type="entry name" value="TRANSALDOLASE_1"/>
    <property type="match status" value="1"/>
</dbReference>
<dbReference type="PROSITE" id="PS00958">
    <property type="entry name" value="TRANSALDOLASE_2"/>
    <property type="match status" value="1"/>
</dbReference>
<sequence>MNQLEALKQFTVVVADSGDIDSIRQFSPQDATTNPSLILKAATLPQYQPLFDDAIAYANLQGGSPETRLINASDRLAVNIGAEVLKSIPGRISTEVDARLSFDRGMCVAKARKLIGMYQEKDIPRSRILIKLAATWEGIRAAEELEKEGINCNLTLLFSFAQARACAEAGVFLISPFVGRIYDWYQEKQPTSDYQAESDPGVISVRDIYDYYKRHRYQTVIMGASFRKVEQILALAGCDRLTISPALLEQLKNSSDPVERQLTPSTEAFHPPSPLSEAEFRWEHHQDAMAVDKLAEGIRLFAADQQKLEALLAAKL</sequence>
<keyword id="KW-0963">Cytoplasm</keyword>
<keyword id="KW-0570">Pentose shunt</keyword>
<keyword id="KW-1185">Reference proteome</keyword>
<keyword id="KW-0704">Schiff base</keyword>
<keyword id="KW-0808">Transferase</keyword>
<accession>Q6D8W0</accession>
<gene>
    <name evidence="2" type="primary">tal1</name>
    <name type="ordered locus">ECA0862</name>
</gene>
<comment type="function">
    <text evidence="2">Transaldolase is important for the balance of metabolites in the pentose-phosphate pathway.</text>
</comment>
<comment type="catalytic activity">
    <reaction evidence="2">
        <text>D-sedoheptulose 7-phosphate + D-glyceraldehyde 3-phosphate = D-erythrose 4-phosphate + beta-D-fructose 6-phosphate</text>
        <dbReference type="Rhea" id="RHEA:17053"/>
        <dbReference type="ChEBI" id="CHEBI:16897"/>
        <dbReference type="ChEBI" id="CHEBI:57483"/>
        <dbReference type="ChEBI" id="CHEBI:57634"/>
        <dbReference type="ChEBI" id="CHEBI:59776"/>
        <dbReference type="EC" id="2.2.1.2"/>
    </reaction>
</comment>
<comment type="pathway">
    <text evidence="2">Carbohydrate degradation; pentose phosphate pathway; D-glyceraldehyde 3-phosphate and beta-D-fructose 6-phosphate from D-ribose 5-phosphate and D-xylulose 5-phosphate (non-oxidative stage): step 2/3.</text>
</comment>
<comment type="subunit">
    <text evidence="1">Homodimer.</text>
</comment>
<comment type="subcellular location">
    <subcellularLocation>
        <location evidence="2">Cytoplasm</location>
    </subcellularLocation>
</comment>
<comment type="similarity">
    <text evidence="2">Belongs to the transaldolase family. Type 1 subfamily.</text>
</comment>